<proteinExistence type="evidence at protein level"/>
<dbReference type="EMBL" id="M24638">
    <property type="protein sequence ID" value="AAA30635.1"/>
    <property type="status" value="ALT_FRAME"/>
    <property type="molecule type" value="Genomic_DNA"/>
</dbReference>
<dbReference type="EMBL" id="BC115989">
    <property type="protein sequence ID" value="AAI15990.1"/>
    <property type="molecule type" value="mRNA"/>
</dbReference>
<dbReference type="PIR" id="S08341">
    <property type="entry name" value="S08341"/>
</dbReference>
<dbReference type="RefSeq" id="NP_001069744.2">
    <property type="nucleotide sequence ID" value="NM_001076276.2"/>
</dbReference>
<dbReference type="FunCoup" id="P12624">
    <property type="interactions" value="906"/>
</dbReference>
<dbReference type="STRING" id="9913.ENSBTAP00000002691"/>
<dbReference type="iPTMnet" id="P12624"/>
<dbReference type="PaxDb" id="9913-ENSBTAP00000002691"/>
<dbReference type="PeptideAtlas" id="P12624"/>
<dbReference type="Ensembl" id="ENSBTAT00000002691.4">
    <property type="protein sequence ID" value="ENSBTAP00000002691.4"/>
    <property type="gene ID" value="ENSBTAG00000002082.7"/>
</dbReference>
<dbReference type="GeneID" id="613548"/>
<dbReference type="KEGG" id="bta:613548"/>
<dbReference type="CTD" id="4082"/>
<dbReference type="VEuPathDB" id="HostDB:ENSBTAG00000002082"/>
<dbReference type="VGNC" id="VGNC:31244">
    <property type="gene designation" value="MARCKS"/>
</dbReference>
<dbReference type="eggNOG" id="ENOG502RB4V">
    <property type="taxonomic scope" value="Eukaryota"/>
</dbReference>
<dbReference type="GeneTree" id="ENSGT00730000111419"/>
<dbReference type="InParanoid" id="P12624"/>
<dbReference type="OMA" id="APFKHEK"/>
<dbReference type="OrthoDB" id="9950867at2759"/>
<dbReference type="Proteomes" id="UP000009136">
    <property type="component" value="Chromosome 9"/>
</dbReference>
<dbReference type="Bgee" id="ENSBTAG00000002082">
    <property type="expression patterns" value="Expressed in floor plate of diencephalon and 104 other cell types or tissues"/>
</dbReference>
<dbReference type="GO" id="GO:0032432">
    <property type="term" value="C:actin filament bundle"/>
    <property type="evidence" value="ECO:0000318"/>
    <property type="project" value="GO_Central"/>
</dbReference>
<dbReference type="GO" id="GO:0005938">
    <property type="term" value="C:cell cortex"/>
    <property type="evidence" value="ECO:0007669"/>
    <property type="project" value="Ensembl"/>
</dbReference>
<dbReference type="GO" id="GO:0030054">
    <property type="term" value="C:cell junction"/>
    <property type="evidence" value="ECO:0007669"/>
    <property type="project" value="Ensembl"/>
</dbReference>
<dbReference type="GO" id="GO:0005813">
    <property type="term" value="C:centrosome"/>
    <property type="evidence" value="ECO:0007669"/>
    <property type="project" value="Ensembl"/>
</dbReference>
<dbReference type="GO" id="GO:0005929">
    <property type="term" value="C:cilium"/>
    <property type="evidence" value="ECO:0007669"/>
    <property type="project" value="Ensembl"/>
</dbReference>
<dbReference type="GO" id="GO:0005737">
    <property type="term" value="C:cytoplasm"/>
    <property type="evidence" value="ECO:0000318"/>
    <property type="project" value="GO_Central"/>
</dbReference>
<dbReference type="GO" id="GO:0005829">
    <property type="term" value="C:cytosol"/>
    <property type="evidence" value="ECO:0007669"/>
    <property type="project" value="Ensembl"/>
</dbReference>
<dbReference type="GO" id="GO:0005783">
    <property type="term" value="C:endoplasmic reticulum"/>
    <property type="evidence" value="ECO:0007669"/>
    <property type="project" value="Ensembl"/>
</dbReference>
<dbReference type="GO" id="GO:0042585">
    <property type="term" value="C:germinal vesicle"/>
    <property type="evidence" value="ECO:0007669"/>
    <property type="project" value="Ensembl"/>
</dbReference>
<dbReference type="GO" id="GO:0016607">
    <property type="term" value="C:nuclear speck"/>
    <property type="evidence" value="ECO:0007669"/>
    <property type="project" value="Ensembl"/>
</dbReference>
<dbReference type="GO" id="GO:0005886">
    <property type="term" value="C:plasma membrane"/>
    <property type="evidence" value="ECO:0000318"/>
    <property type="project" value="GO_Central"/>
</dbReference>
<dbReference type="GO" id="GO:0051015">
    <property type="term" value="F:actin filament binding"/>
    <property type="evidence" value="ECO:0000318"/>
    <property type="project" value="GO_Central"/>
</dbReference>
<dbReference type="GO" id="GO:0005516">
    <property type="term" value="F:calmodulin binding"/>
    <property type="evidence" value="ECO:0007669"/>
    <property type="project" value="UniProtKB-KW"/>
</dbReference>
<dbReference type="GO" id="GO:0042802">
    <property type="term" value="F:identical protein binding"/>
    <property type="evidence" value="ECO:0007669"/>
    <property type="project" value="Ensembl"/>
</dbReference>
<dbReference type="GO" id="GO:0005080">
    <property type="term" value="F:protein kinase C binding"/>
    <property type="evidence" value="ECO:0007669"/>
    <property type="project" value="Ensembl"/>
</dbReference>
<dbReference type="GO" id="GO:0051764">
    <property type="term" value="P:actin crosslink formation"/>
    <property type="evidence" value="ECO:0007669"/>
    <property type="project" value="Ensembl"/>
</dbReference>
<dbReference type="GO" id="GO:0051017">
    <property type="term" value="P:actin filament bundle assembly"/>
    <property type="evidence" value="ECO:0007669"/>
    <property type="project" value="Ensembl"/>
</dbReference>
<dbReference type="GO" id="GO:0007015">
    <property type="term" value="P:actin filament organization"/>
    <property type="evidence" value="ECO:0000318"/>
    <property type="project" value="GO_Central"/>
</dbReference>
<dbReference type="GO" id="GO:0006915">
    <property type="term" value="P:apoptotic process"/>
    <property type="evidence" value="ECO:0007669"/>
    <property type="project" value="Ensembl"/>
</dbReference>
<dbReference type="GO" id="GO:0007417">
    <property type="term" value="P:central nervous system development"/>
    <property type="evidence" value="ECO:0000318"/>
    <property type="project" value="GO_Central"/>
</dbReference>
<dbReference type="GO" id="GO:0007005">
    <property type="term" value="P:mitochondrion organization"/>
    <property type="evidence" value="ECO:0007669"/>
    <property type="project" value="Ensembl"/>
</dbReference>
<dbReference type="GO" id="GO:0021915">
    <property type="term" value="P:neural tube development"/>
    <property type="evidence" value="ECO:0007669"/>
    <property type="project" value="Ensembl"/>
</dbReference>
<dbReference type="GO" id="GO:0022008">
    <property type="term" value="P:neurogenesis"/>
    <property type="evidence" value="ECO:0007669"/>
    <property type="project" value="Ensembl"/>
</dbReference>
<dbReference type="GO" id="GO:0034976">
    <property type="term" value="P:response to endoplasmic reticulum stress"/>
    <property type="evidence" value="ECO:0007669"/>
    <property type="project" value="Ensembl"/>
</dbReference>
<dbReference type="InterPro" id="IPR002101">
    <property type="entry name" value="MARCKS"/>
</dbReference>
<dbReference type="PANTHER" id="PTHR14353:SF9">
    <property type="entry name" value="MYRISTOYLATED ALANINE-RICH C-KINASE SUBSTRATE"/>
    <property type="match status" value="1"/>
</dbReference>
<dbReference type="PANTHER" id="PTHR14353">
    <property type="entry name" value="MYRISTOYLATED ALANINE-RICH C-KINASE SUBSTRATE MARCKS"/>
    <property type="match status" value="1"/>
</dbReference>
<dbReference type="Pfam" id="PF02063">
    <property type="entry name" value="MARCKS"/>
    <property type="match status" value="1"/>
</dbReference>
<dbReference type="PRINTS" id="PR00963">
    <property type="entry name" value="MARCKS"/>
</dbReference>
<dbReference type="PROSITE" id="PS00826">
    <property type="entry name" value="MARCKS_1"/>
    <property type="match status" value="1"/>
</dbReference>
<dbReference type="PROSITE" id="PS00827">
    <property type="entry name" value="MARCKS_2"/>
    <property type="match status" value="1"/>
</dbReference>
<accession>P12624</accession>
<accession>Q1LZI0</accession>
<sequence>MGAQFSKTAAKGEATAERPGEAAVASSPSKANGQENGHVKVNGDASPAAAEPGAKEELQANGSAPAADKEEPAAAGSGAASPAAAEKDEPAAAAPDAGASPVEKEAPVEGEAAEPGSPTAAEGEAASAASSTSSPKAEDGATPSPSNETPKKKKKRFSFKKSFKLSGFSFKKNKKEAGEGGEAEGAAGASAEGGKDEASGGAAAAAGEAGAAPGEPTAAPGEEAAAGEEGAAGGDPQEAKPEEAAVAPEKPPASEEAKAVEEPSKAEEKAEEAGVSAAGCEAPSAAGPGVPPEQEAAPAEEAAAAPASSACAAPSQEAQPECSPEAPPAEAAE</sequence>
<protein>
    <recommendedName>
        <fullName>Myristoylated alanine-rich C-kinase substrate</fullName>
        <shortName>MARCKS</shortName>
    </recommendedName>
    <alternativeName>
        <fullName>ACAMP-81</fullName>
    </alternativeName>
</protein>
<evidence type="ECO:0000250" key="1">
    <source>
        <dbReference type="UniProtKB" id="P26645"/>
    </source>
</evidence>
<evidence type="ECO:0000250" key="2">
    <source>
        <dbReference type="UniProtKB" id="P29966"/>
    </source>
</evidence>
<evidence type="ECO:0000250" key="3">
    <source>
        <dbReference type="UniProtKB" id="P30009"/>
    </source>
</evidence>
<evidence type="ECO:0000256" key="4">
    <source>
        <dbReference type="SAM" id="MobiDB-lite"/>
    </source>
</evidence>
<evidence type="ECO:0000269" key="5">
    <source>
    </source>
</evidence>
<evidence type="ECO:0000269" key="6">
    <source>
    </source>
</evidence>
<evidence type="ECO:0000269" key="7">
    <source>
    </source>
</evidence>
<evidence type="ECO:0000305" key="8"/>
<evidence type="ECO:0000305" key="9">
    <source>
    </source>
</evidence>
<keyword id="KW-0007">Acetylation</keyword>
<keyword id="KW-0009">Actin-binding</keyword>
<keyword id="KW-0112">Calmodulin-binding</keyword>
<keyword id="KW-1003">Cell membrane</keyword>
<keyword id="KW-0963">Cytoplasm</keyword>
<keyword id="KW-0206">Cytoskeleton</keyword>
<keyword id="KW-0903">Direct protein sequencing</keyword>
<keyword id="KW-0449">Lipoprotein</keyword>
<keyword id="KW-0472">Membrane</keyword>
<keyword id="KW-0519">Myristate</keyword>
<keyword id="KW-0597">Phosphoprotein</keyword>
<keyword id="KW-1185">Reference proteome</keyword>
<name>MARCS_BOVIN</name>
<gene>
    <name type="primary">MARCKS</name>
    <name type="synonym">MACS</name>
</gene>
<organism>
    <name type="scientific">Bos taurus</name>
    <name type="common">Bovine</name>
    <dbReference type="NCBI Taxonomy" id="9913"/>
    <lineage>
        <taxon>Eukaryota</taxon>
        <taxon>Metazoa</taxon>
        <taxon>Chordata</taxon>
        <taxon>Craniata</taxon>
        <taxon>Vertebrata</taxon>
        <taxon>Euteleostomi</taxon>
        <taxon>Mammalia</taxon>
        <taxon>Eutheria</taxon>
        <taxon>Laurasiatheria</taxon>
        <taxon>Artiodactyla</taxon>
        <taxon>Ruminantia</taxon>
        <taxon>Pecora</taxon>
        <taxon>Bovidae</taxon>
        <taxon>Bovinae</taxon>
        <taxon>Bos</taxon>
    </lineage>
</organism>
<comment type="function">
    <text evidence="1 2 3">Membrane-associated protein that plays a role in the structural modulation of the actin cytoskeleton, chemotaxis, motility, cell adhesion, phagocytosis, and exocytosis through lipid sequestering and/or protein docking to membranes. Thus, exerts an influence on a plethora of physiological processes, such as embryonic development, tissue regeneration, neuronal plasticity, and inflammation. Sequesters phosphatidylinositol 4,5-bisphosphate (PIP2) at lipid rafts in the plasma membrane of quiescent cells, an action reversed by protein kinase C, ultimately inhibiting exocytosis. During inflammation, promotes the migration and adhesion of inflammatory cells and the secretion of cytokines such as tumor necrosis factor (TNF), particularly in macrophages (By similarity). Plays an essential role in bacteria-induced intracellular reactive oxygen species (ROS) formation in the monocytic cell type. Participates in the regulation of neurite initiation and outgrowth by interacting with components of cellular machinery including CDC42 that regulates cell shape and process extension through modulation of the cytoskeleton (By similarity). Plays also a role in axon development by mediating docking and fusion of RAB10-positive vesicles with the plasma membrane (By similarity).</text>
</comment>
<comment type="subunit">
    <text evidence="1 3">Interacts with CDC42 (By similarity). Interacts with GTP-bound form of RAB10 (By similarity). Interacts with calmodulin/CALM1 (By similarity).</text>
</comment>
<comment type="subcellular location">
    <subcellularLocation>
        <location evidence="7">Cell membrane</location>
        <topology evidence="7">Lipid-anchor</topology>
    </subcellularLocation>
    <subcellularLocation>
        <location evidence="7">Cytoplasm</location>
    </subcellularLocation>
    <subcellularLocation>
        <location evidence="2">Cytoplasm</location>
        <location evidence="2">Cytoskeleton</location>
    </subcellularLocation>
    <text evidence="2">PKC-dependent phosphorylation displaces MARCKS from the cell membrane and subsequent dephosphorylation is accompanied by its reassociation with the membrane.</text>
</comment>
<comment type="PTM">
    <text evidence="5 6">Phosphorylation by PKC displaces MARCKS from the membrane. It also inhibits the F-actin cross-linking activity.</text>
</comment>
<comment type="PTM">
    <text evidence="6">Myristoylated. A proper myristoylation is essential for the proper distribution to the plasma membrane.</text>
</comment>
<comment type="PTM">
    <text evidence="1">Acetylated at Lys-171 by KAT5; acetylation is required for its subsequent phosphorylation. Deacetylated by SIRT2.</text>
</comment>
<comment type="similarity">
    <text evidence="8">Belongs to the MARCKS family.</text>
</comment>
<comment type="sequence caution" evidence="8">
    <conflict type="frameshift">
        <sequence resource="EMBL-CDS" id="AAA30635"/>
    </conflict>
</comment>
<feature type="initiator methionine" description="Removed" evidence="6">
    <location>
        <position position="1"/>
    </location>
</feature>
<feature type="chain" id="PRO_0000157147" description="Myristoylated alanine-rich C-kinase substrate">
    <location>
        <begin position="2"/>
        <end position="333"/>
    </location>
</feature>
<feature type="region of interest" description="Disordered" evidence="4">
    <location>
        <begin position="1"/>
        <end position="333"/>
    </location>
</feature>
<feature type="region of interest" description="Calmodulin-binding (PSD)">
    <location>
        <begin position="151"/>
        <end position="175"/>
    </location>
</feature>
<feature type="compositionally biased region" description="Polar residues" evidence="4">
    <location>
        <begin position="26"/>
        <end position="35"/>
    </location>
</feature>
<feature type="compositionally biased region" description="Low complexity" evidence="4">
    <location>
        <begin position="73"/>
        <end position="84"/>
    </location>
</feature>
<feature type="compositionally biased region" description="Low complexity" evidence="4">
    <location>
        <begin position="91"/>
        <end position="101"/>
    </location>
</feature>
<feature type="compositionally biased region" description="Low complexity" evidence="4">
    <location>
        <begin position="109"/>
        <end position="135"/>
    </location>
</feature>
<feature type="compositionally biased region" description="Basic residues" evidence="4">
    <location>
        <begin position="151"/>
        <end position="163"/>
    </location>
</feature>
<feature type="compositionally biased region" description="Low complexity" evidence="4">
    <location>
        <begin position="199"/>
        <end position="229"/>
    </location>
</feature>
<feature type="compositionally biased region" description="Basic and acidic residues" evidence="4">
    <location>
        <begin position="252"/>
        <end position="272"/>
    </location>
</feature>
<feature type="compositionally biased region" description="Low complexity" evidence="4">
    <location>
        <begin position="292"/>
        <end position="333"/>
    </location>
</feature>
<feature type="modified residue" description="Phosphothreonine" evidence="1">
    <location>
        <position position="15"/>
    </location>
</feature>
<feature type="modified residue" description="Phosphoserine" evidence="2">
    <location>
        <position position="26"/>
    </location>
</feature>
<feature type="modified residue" description="Phosphoserine" evidence="6">
    <location>
        <position position="27"/>
    </location>
</feature>
<feature type="modified residue" description="Phosphoserine" evidence="2">
    <location>
        <position position="29"/>
    </location>
</feature>
<feature type="modified residue" description="Phosphoserine" evidence="6">
    <location>
        <position position="46"/>
    </location>
</feature>
<feature type="modified residue" description="Phosphoserine" evidence="2">
    <location>
        <position position="63"/>
    </location>
</feature>
<feature type="modified residue" description="Phosphoserine" evidence="2">
    <location>
        <position position="77"/>
    </location>
</feature>
<feature type="modified residue" description="Phosphoserine" evidence="6">
    <location>
        <position position="81"/>
    </location>
</feature>
<feature type="modified residue" description="Phosphoserine" evidence="6">
    <location>
        <position position="100"/>
    </location>
</feature>
<feature type="modified residue" description="Phosphoserine; by MAPK" evidence="9">
    <location>
        <position position="117"/>
    </location>
</feature>
<feature type="modified residue" description="Phosphoserine" evidence="3">
    <location>
        <position position="127"/>
    </location>
</feature>
<feature type="modified residue" description="Phosphoserine" evidence="6">
    <location>
        <position position="134"/>
    </location>
</feature>
<feature type="modified residue" description="Phosphothreonine" evidence="2">
    <location>
        <position position="142"/>
    </location>
</feature>
<feature type="modified residue" description="Phosphoserine" evidence="2">
    <location>
        <position position="144"/>
    </location>
</feature>
<feature type="modified residue" description="Phosphoserine" evidence="2">
    <location>
        <position position="146"/>
    </location>
</feature>
<feature type="modified residue" description="Phosphothreonine" evidence="2">
    <location>
        <position position="149"/>
    </location>
</feature>
<feature type="modified residue" description="Phosphoserine; by PKC" evidence="5">
    <location>
        <position position="158"/>
    </location>
</feature>
<feature type="modified residue" description="Phosphoserine; by PKC" evidence="5">
    <location>
        <position position="162"/>
    </location>
</feature>
<feature type="modified residue" description="Phosphoserine; by PKC" evidence="5">
    <location>
        <position position="166"/>
    </location>
</feature>
<feature type="modified residue" description="Phosphoserine; by PKC" evidence="5">
    <location>
        <position position="169"/>
    </location>
</feature>
<feature type="modified residue" description="N6-acetyllysine" evidence="1">
    <location>
        <position position="171"/>
    </location>
</feature>
<feature type="modified residue" description="Phosphoserine" evidence="1">
    <location>
        <position position="264"/>
    </location>
</feature>
<feature type="modified residue" description="Phosphoserine" evidence="2">
    <location>
        <position position="315"/>
    </location>
</feature>
<feature type="lipid moiety-binding region" description="N-myristoyl glycine" evidence="6">
    <location>
        <position position="2"/>
    </location>
</feature>
<feature type="sequence conflict" description="In Ref. 2; AAA30635." evidence="8" ref="2">
    <original>AS</original>
    <variation>H</variation>
    <location>
        <begin position="99"/>
        <end position="100"/>
    </location>
</feature>
<feature type="sequence conflict" description="In Ref. 1 and 2; AAA30635." evidence="8" ref="1 2">
    <original>E</original>
    <variation>G</variation>
    <location>
        <position position="111"/>
    </location>
</feature>
<feature type="sequence conflict" description="In Ref. 1 and 2; AAA30635." evidence="8" ref="1 2">
    <original>T</original>
    <variation>S</variation>
    <location>
        <position position="132"/>
    </location>
</feature>
<feature type="sequence conflict" description="In Ref. 2; AAA30635." evidence="8" ref="2">
    <original>SEE</original>
    <variation>RRG</variation>
    <location>
        <begin position="254"/>
        <end position="256"/>
    </location>
</feature>
<feature type="sequence conflict" description="In Ref. 2; AAA30635." evidence="8" ref="2">
    <original>G</original>
    <variation>GAAG</variation>
    <location>
        <position position="279"/>
    </location>
</feature>
<feature type="sequence conflict" description="In Ref. 1 and 2; AAA30635." evidence="8" ref="1 2">
    <original>VPPEQEAAPA</original>
    <variation>CPRAGGAPR</variation>
    <location>
        <begin position="290"/>
        <end position="299"/>
    </location>
</feature>
<feature type="sequence conflict" description="In Ref. 1, 2; AAA30635 and 4." evidence="8" ref="1 2 4">
    <original>AAP</original>
    <variation>PPR</variation>
    <location>
        <begin position="304"/>
        <end position="306"/>
    </location>
</feature>
<feature type="sequence conflict" description="In Ref. 1 and 2; AAA30635." evidence="8" ref="1 2">
    <original>A</original>
    <variation>S</variation>
    <location>
        <position position="312"/>
    </location>
</feature>
<reference key="1">
    <citation type="journal article" date="1989" name="Nucleic Acids Res.">
        <title>Nucleotide sequence of a cDNA for the bovine myristoylated alanine-rich C kinase substrate (MARCKS).</title>
        <authorList>
            <person name="Stumpo D.J."/>
            <person name="Graff J.M."/>
            <person name="Albert K.A."/>
            <person name="Greengard P."/>
            <person name="Blackshear P.J."/>
        </authorList>
    </citation>
    <scope>NUCLEOTIDE SEQUENCE [MRNA]</scope>
</reference>
<reference key="2">
    <citation type="journal article" date="1989" name="Proc. Natl. Acad. Sci. U.S.A.">
        <title>Molecular cloning, characterization, and expression of a cDNA encoding the '80- to 87-kDa' myristoylated alanine-rich C kinase substrate: a major cellular substrate for protein kinase C.</title>
        <authorList>
            <person name="Stumpo D.J."/>
            <person name="Graff J.M."/>
            <person name="Albert K.A."/>
            <person name="Greengard P."/>
            <person name="Blackshear P.J."/>
        </authorList>
    </citation>
    <scope>NUCLEOTIDE SEQUENCE [GENOMIC DNA]</scope>
    <scope>PARTIAL PROTEIN SEQUENCE</scope>
</reference>
<reference key="3">
    <citation type="submission" date="2006-05" db="EMBL/GenBank/DDBJ databases">
        <authorList>
            <consortium name="NIH - Mammalian Gene Collection (MGC) project"/>
        </authorList>
    </citation>
    <scope>NUCLEOTIDE SEQUENCE [LARGE SCALE MRNA]</scope>
    <source>
        <strain>Hereford</strain>
        <tissue>Hypothalamus</tissue>
    </source>
</reference>
<reference key="4">
    <citation type="journal article" date="1992" name="Eur. J. Biochem.">
        <title>Relationship between the major protein kinase C substrates acidic 80-kDa protein-kinase-C substrate (80K) and myristoylated alanine-rich C-kinase substrate (MARCKS). Members of a gene family or equivalent genes in different species.</title>
        <authorList>
            <person name="Herget T."/>
            <person name="Brooks S.F."/>
            <person name="Broad S."/>
            <person name="Rozengurt E."/>
        </authorList>
    </citation>
    <scope>NUCLEOTIDE SEQUENCE [GENOMIC DNA] OF 191-322</scope>
</reference>
<reference key="5">
    <citation type="journal article" date="1992" name="Biochem. Biophys. Res. Commun.">
        <title>Acidic calmodulin binding protein, ACAMP-81, is MARCKS protein interacting with synapsin I.</title>
        <authorList>
            <person name="Mizutani A."/>
            <person name="Tokumitsu H."/>
            <person name="Hidaka H."/>
        </authorList>
    </citation>
    <scope>PARTIAL PROTEIN SEQUENCE</scope>
</reference>
<reference key="6">
    <citation type="journal article" date="1993" name="J. Biol. Chem.">
        <title>Isolation of the non-myristoylated form of a major substrate of protein kinase C (MARCKS) from bovine brain.</title>
        <authorList>
            <person name="Manenti S."/>
            <person name="Sorokine O."/>
            <person name="van Dorsselaer A."/>
            <person name="Taniguchi H."/>
        </authorList>
    </citation>
    <scope>PROTEIN SEQUENCE OF 3-12</scope>
    <scope>IDENTIFICATION OF A NON-MYRISTOYLATED FORM</scope>
    <scope>SUBCELLULAR LOCATION</scope>
    <scope>IDENTIFICATION BY MASS SPECTROMETRY</scope>
</reference>
<reference key="7">
    <citation type="journal article" date="1989" name="J. Biol. Chem.">
        <title>Characterization of the phosphorylation sites in the chicken and bovine myristoylated alanine-rich C kinase substrate protein, a prominent cellular substrate for protein kinase C.</title>
        <authorList>
            <person name="Graff J.M."/>
            <person name="Stumpo D.J."/>
            <person name="Blackshear P.J."/>
        </authorList>
    </citation>
    <scope>PHOSPHORYLATION AT SER-158; SER-162; SER-166 AND SER-169</scope>
</reference>
<reference key="8">
    <citation type="journal article" date="1994" name="J. Biol. Chem.">
        <title>Myristoylated alanine-rich C kinase substrate (MARCKS), a major protein kinase C substrate, is an in vivo substrate of proline-directed protein kinase(s). A mass spectroscopic analysis of the post-translational modifications.</title>
        <authorList>
            <person name="Taniguchi H."/>
            <person name="Manenti S."/>
            <person name="Suzuki M."/>
            <person name="Titani K."/>
        </authorList>
    </citation>
    <scope>SEQUENCE REVISION</scope>
    <scope>MYRISTOYLATION AT GLY-2</scope>
    <scope>PHOSPHORYLATION AT SER-27; SER-46; SER-81; SER-100; SER-117 AND SER-134</scope>
    <scope>IDENTIFICATION BY MASS SPECTROMETRY</scope>
    <source>
        <tissue>Brain</tissue>
    </source>
</reference>
<reference key="9">
    <citation type="journal article" date="1991" name="Nature">
        <title>Regulation by phosphorylation of reversible association of a myristoylated protein kinase C substrate with the plasma membrane.</title>
        <authorList>
            <person name="Thelen M."/>
            <person name="Rosen A."/>
            <person name="Nairn A.C."/>
            <person name="Aderem A."/>
        </authorList>
    </citation>
    <scope>REVERSIBLE ASSOCIATION WITH THE MEMBRANE</scope>
</reference>
<reference key="10">
    <citation type="journal article" date="1992" name="Nature">
        <title>MARCKS is an actin filament crosslinking protein regulated by protein kinase C and calcium-calmodulin.</title>
        <authorList>
            <person name="Hartwig J.H."/>
            <person name="Thelen M."/>
            <person name="Rosen A."/>
            <person name="Janmey P.A."/>
            <person name="Nairn A.C."/>
            <person name="Aderem A."/>
        </authorList>
    </citation>
    <scope>ACTIN-FILAMENT CROSS-LINKING</scope>
</reference>